<comment type="function">
    <text evidence="1">Bifunctional serine/threonine kinase and phosphorylase involved in the regulation of the pyruvate, phosphate dikinase (PPDK) by catalyzing its phosphorylation/dephosphorylation.</text>
</comment>
<comment type="catalytic activity">
    <reaction evidence="1">
        <text>N(tele)-phospho-L-histidyl/L-threonyl-[pyruvate, phosphate dikinase] + ADP = N(tele)-phospho-L-histidyl/O-phospho-L-threonyl-[pyruvate, phosphate dikinase] + AMP + H(+)</text>
        <dbReference type="Rhea" id="RHEA:43692"/>
        <dbReference type="Rhea" id="RHEA-COMP:10650"/>
        <dbReference type="Rhea" id="RHEA-COMP:10651"/>
        <dbReference type="ChEBI" id="CHEBI:15378"/>
        <dbReference type="ChEBI" id="CHEBI:30013"/>
        <dbReference type="ChEBI" id="CHEBI:61977"/>
        <dbReference type="ChEBI" id="CHEBI:83586"/>
        <dbReference type="ChEBI" id="CHEBI:456215"/>
        <dbReference type="ChEBI" id="CHEBI:456216"/>
        <dbReference type="EC" id="2.7.11.32"/>
    </reaction>
</comment>
<comment type="catalytic activity">
    <reaction evidence="1">
        <text>N(tele)-phospho-L-histidyl/O-phospho-L-threonyl-[pyruvate, phosphate dikinase] + phosphate + H(+) = N(tele)-phospho-L-histidyl/L-threonyl-[pyruvate, phosphate dikinase] + diphosphate</text>
        <dbReference type="Rhea" id="RHEA:43696"/>
        <dbReference type="Rhea" id="RHEA-COMP:10650"/>
        <dbReference type="Rhea" id="RHEA-COMP:10651"/>
        <dbReference type="ChEBI" id="CHEBI:15378"/>
        <dbReference type="ChEBI" id="CHEBI:30013"/>
        <dbReference type="ChEBI" id="CHEBI:33019"/>
        <dbReference type="ChEBI" id="CHEBI:43474"/>
        <dbReference type="ChEBI" id="CHEBI:61977"/>
        <dbReference type="ChEBI" id="CHEBI:83586"/>
        <dbReference type="EC" id="2.7.4.27"/>
    </reaction>
</comment>
<comment type="similarity">
    <text evidence="1">Belongs to the pyruvate, phosphate/water dikinase regulatory protein family. PDRP subfamily.</text>
</comment>
<keyword id="KW-0418">Kinase</keyword>
<keyword id="KW-0547">Nucleotide-binding</keyword>
<keyword id="KW-1185">Reference proteome</keyword>
<keyword id="KW-0723">Serine/threonine-protein kinase</keyword>
<keyword id="KW-0808">Transferase</keyword>
<feature type="chain" id="PRO_0000316709" description="Putative pyruvate, phosphate dikinase regulatory protein">
    <location>
        <begin position="1"/>
        <end position="276"/>
    </location>
</feature>
<feature type="binding site" evidence="1">
    <location>
        <begin position="153"/>
        <end position="160"/>
    </location>
    <ligand>
        <name>ADP</name>
        <dbReference type="ChEBI" id="CHEBI:456216"/>
    </ligand>
</feature>
<reference key="1">
    <citation type="journal article" date="2011" name="J. Bacteriol.">
        <title>Genome of Ochrobactrum anthropi ATCC 49188 T, a versatile opportunistic pathogen and symbiont of several eukaryotic hosts.</title>
        <authorList>
            <person name="Chain P.S."/>
            <person name="Lang D.M."/>
            <person name="Comerci D.J."/>
            <person name="Malfatti S.A."/>
            <person name="Vergez L.M."/>
            <person name="Shin M."/>
            <person name="Ugalde R.A."/>
            <person name="Garcia E."/>
            <person name="Tolmasky M.E."/>
        </authorList>
    </citation>
    <scope>NUCLEOTIDE SEQUENCE [LARGE SCALE GENOMIC DNA]</scope>
    <source>
        <strain>ATCC 49188 / DSM 6882 / CCUG 24695 / JCM 21032 / LMG 3331 / NBRC 15819 / NCTC 12168 / Alc 37</strain>
    </source>
</reference>
<proteinExistence type="inferred from homology"/>
<protein>
    <recommendedName>
        <fullName evidence="1">Putative pyruvate, phosphate dikinase regulatory protein</fullName>
        <shortName evidence="1">PPDK regulatory protein</shortName>
        <ecNumber evidence="1">2.7.11.32</ecNumber>
        <ecNumber evidence="1">2.7.4.27</ecNumber>
    </recommendedName>
</protein>
<organism>
    <name type="scientific">Brucella anthropi (strain ATCC 49188 / DSM 6882 / CCUG 24695 / JCM 21032 / LMG 3331 / NBRC 15819 / NCTC 12168 / Alc 37)</name>
    <name type="common">Ochrobactrum anthropi</name>
    <dbReference type="NCBI Taxonomy" id="439375"/>
    <lineage>
        <taxon>Bacteria</taxon>
        <taxon>Pseudomonadati</taxon>
        <taxon>Pseudomonadota</taxon>
        <taxon>Alphaproteobacteria</taxon>
        <taxon>Hyphomicrobiales</taxon>
        <taxon>Brucellaceae</taxon>
        <taxon>Brucella/Ochrobactrum group</taxon>
        <taxon>Brucella</taxon>
    </lineage>
</organism>
<name>PDRP_BRUA4</name>
<evidence type="ECO:0000255" key="1">
    <source>
        <dbReference type="HAMAP-Rule" id="MF_00921"/>
    </source>
</evidence>
<accession>A6WX71</accession>
<gene>
    <name type="ordered locus">Oant_0853</name>
</gene>
<sequence length="276" mass="30300">MTRPLSYFHLHLISDATGETLLAAGRAAAAQYANARAIEHIYPLIRTEKQLRKVLEGIDAEPGIVLYTIVDQKLAAIIDDSCAEMGVPSVSVLEPVLNTFQSYLGAPAHRRASAQHVLNADYFRRIDALNFTMEHDDGQLPYDIEEADVILVGISRTSKTPTSIYLANRGIKATNVPIVLGIPLPEVLFTAKRPLIVGLVATAERISQIRQNRPLGNVPSLDTGLYTDRVSISEELAYARNICNRNGWPIIDVSRRSIEETAAAILALLRAHNEKG</sequence>
<dbReference type="EC" id="2.7.11.32" evidence="1"/>
<dbReference type="EC" id="2.7.4.27" evidence="1"/>
<dbReference type="EMBL" id="CP000758">
    <property type="protein sequence ID" value="ABS13575.1"/>
    <property type="molecule type" value="Genomic_DNA"/>
</dbReference>
<dbReference type="RefSeq" id="WP_012091069.1">
    <property type="nucleotide sequence ID" value="NC_009667.1"/>
</dbReference>
<dbReference type="SMR" id="A6WX71"/>
<dbReference type="STRING" id="439375.Oant_0853"/>
<dbReference type="KEGG" id="oan:Oant_0853"/>
<dbReference type="PATRIC" id="fig|439375.7.peg.898"/>
<dbReference type="eggNOG" id="COG1806">
    <property type="taxonomic scope" value="Bacteria"/>
</dbReference>
<dbReference type="HOGENOM" id="CLU_046206_2_0_5"/>
<dbReference type="PhylomeDB" id="A6WX71"/>
<dbReference type="Proteomes" id="UP000002301">
    <property type="component" value="Chromosome 1"/>
</dbReference>
<dbReference type="GO" id="GO:0043531">
    <property type="term" value="F:ADP binding"/>
    <property type="evidence" value="ECO:0007669"/>
    <property type="project" value="UniProtKB-UniRule"/>
</dbReference>
<dbReference type="GO" id="GO:0005524">
    <property type="term" value="F:ATP binding"/>
    <property type="evidence" value="ECO:0007669"/>
    <property type="project" value="InterPro"/>
</dbReference>
<dbReference type="GO" id="GO:0016776">
    <property type="term" value="F:phosphotransferase activity, phosphate group as acceptor"/>
    <property type="evidence" value="ECO:0007669"/>
    <property type="project" value="UniProtKB-UniRule"/>
</dbReference>
<dbReference type="GO" id="GO:0004674">
    <property type="term" value="F:protein serine/threonine kinase activity"/>
    <property type="evidence" value="ECO:0007669"/>
    <property type="project" value="UniProtKB-UniRule"/>
</dbReference>
<dbReference type="HAMAP" id="MF_00921">
    <property type="entry name" value="PDRP"/>
    <property type="match status" value="1"/>
</dbReference>
<dbReference type="InterPro" id="IPR005177">
    <property type="entry name" value="Kinase-pyrophosphorylase"/>
</dbReference>
<dbReference type="InterPro" id="IPR026565">
    <property type="entry name" value="PPDK_reg"/>
</dbReference>
<dbReference type="NCBIfam" id="NF003742">
    <property type="entry name" value="PRK05339.1"/>
    <property type="match status" value="1"/>
</dbReference>
<dbReference type="PANTHER" id="PTHR31756">
    <property type="entry name" value="PYRUVATE, PHOSPHATE DIKINASE REGULATORY PROTEIN 1, CHLOROPLASTIC"/>
    <property type="match status" value="1"/>
</dbReference>
<dbReference type="PANTHER" id="PTHR31756:SF3">
    <property type="entry name" value="PYRUVATE, PHOSPHATE DIKINASE REGULATORY PROTEIN 1, CHLOROPLASTIC"/>
    <property type="match status" value="1"/>
</dbReference>
<dbReference type="Pfam" id="PF03618">
    <property type="entry name" value="Kinase-PPPase"/>
    <property type="match status" value="1"/>
</dbReference>